<accession>Q5YKI7</accession>
<accession>Q5YKI8</accession>
<protein>
    <recommendedName>
        <fullName>Putative gametogenetin-binding protein 1</fullName>
    </recommendedName>
</protein>
<comment type="function">
    <text evidence="1">May be involved in spermatogenesis.</text>
</comment>
<comment type="subunit">
    <text evidence="2">Interacts with CCDC159 (By similarity). Interacts with GGN (By similarity).</text>
</comment>
<comment type="subcellular location">
    <subcellularLocation>
        <location>Cytoplasm</location>
    </subcellularLocation>
    <subcellularLocation>
        <location>Membrane</location>
        <topology>Peripheral membrane protein</topology>
    </subcellularLocation>
    <subcellularLocation>
        <location evidence="1">Golgi apparatus</location>
    </subcellularLocation>
</comment>
<comment type="alternative products">
    <event type="alternative splicing"/>
    <isoform>
        <id>Q5YKI7-1</id>
        <name>1</name>
        <sequence type="displayed"/>
    </isoform>
    <isoform>
        <id>Q5YKI7-2</id>
        <name>2</name>
        <sequence type="described" ref="VSP_019174"/>
    </isoform>
</comment>
<comment type="caution">
    <text evidence="4">Could be the product of a pseudogene. The open reading frame is disrupted by a nonsense mutation after 8 amino acids; consequently, this gene is currently considered to be a unitary pseudogene in human even though it is functional in other mammals.</text>
</comment>
<name>GGNB1_HUMAN</name>
<feature type="chain" id="PRO_0000239345" description="Putative gametogenetin-binding protein 1">
    <location>
        <begin position="1"/>
        <end position="109"/>
    </location>
</feature>
<feature type="region of interest" description="Interaction with GGN" evidence="1">
    <location>
        <begin position="24"/>
        <end position="109"/>
    </location>
</feature>
<feature type="splice variant" id="VSP_019174" description="In isoform 2." evidence="3">
    <location>
        <begin position="73"/>
        <end position="93"/>
    </location>
</feature>
<keyword id="KW-0025">Alternative splicing</keyword>
<keyword id="KW-0963">Cytoplasm</keyword>
<keyword id="KW-0217">Developmental protein</keyword>
<keyword id="KW-0221">Differentiation</keyword>
<keyword id="KW-0333">Golgi apparatus</keyword>
<keyword id="KW-0472">Membrane</keyword>
<keyword id="KW-1185">Reference proteome</keyword>
<keyword id="KW-0744">Spermatogenesis</keyword>
<gene>
    <name type="primary">GGNBP1</name>
</gene>
<dbReference type="EMBL" id="AY383626">
    <property type="protein sequence ID" value="AAR26430.1"/>
    <property type="molecule type" value="mRNA"/>
</dbReference>
<dbReference type="EMBL" id="AY383627">
    <property type="protein sequence ID" value="AAR26431.1"/>
    <property type="molecule type" value="mRNA"/>
</dbReference>
<dbReference type="EMBL" id="Z93017">
    <property type="status" value="NOT_ANNOTATED_CDS"/>
    <property type="molecule type" value="Genomic_DNA"/>
</dbReference>
<dbReference type="PhosphoSitePlus" id="Q5YKI7"/>
<dbReference type="BioMuta" id="HGNC:19427"/>
<dbReference type="DMDM" id="74708295"/>
<dbReference type="AGR" id="HGNC:19427"/>
<dbReference type="GeneCards" id="GGNBP1"/>
<dbReference type="HGNC" id="HGNC:19427">
    <property type="gene designation" value="GGNBP1"/>
</dbReference>
<dbReference type="MIM" id="609495">
    <property type="type" value="gene"/>
</dbReference>
<dbReference type="neXtProt" id="NX_Q5YKI7"/>
<dbReference type="InParanoid" id="Q5YKI7"/>
<dbReference type="PAN-GO" id="Q5YKI7">
    <property type="GO annotations" value="1 GO annotation based on evolutionary models"/>
</dbReference>
<dbReference type="PhylomeDB" id="Q5YKI7"/>
<dbReference type="ChiTaRS" id="GGNBP1">
    <property type="organism name" value="human"/>
</dbReference>
<dbReference type="Pharos" id="Q5YKI7">
    <property type="development level" value="Tdark"/>
</dbReference>
<dbReference type="PRO" id="PR:Q5YKI7"/>
<dbReference type="Proteomes" id="UP000005640">
    <property type="component" value="Unplaced"/>
</dbReference>
<dbReference type="RNAct" id="Q5YKI7">
    <property type="molecule type" value="protein"/>
</dbReference>
<dbReference type="GO" id="GO:0005794">
    <property type="term" value="C:Golgi apparatus"/>
    <property type="evidence" value="ECO:0007669"/>
    <property type="project" value="UniProtKB-SubCell"/>
</dbReference>
<dbReference type="GO" id="GO:0016020">
    <property type="term" value="C:membrane"/>
    <property type="evidence" value="ECO:0007669"/>
    <property type="project" value="UniProtKB-SubCell"/>
</dbReference>
<dbReference type="GO" id="GO:0030154">
    <property type="term" value="P:cell differentiation"/>
    <property type="evidence" value="ECO:0007669"/>
    <property type="project" value="UniProtKB-KW"/>
</dbReference>
<dbReference type="GO" id="GO:0007283">
    <property type="term" value="P:spermatogenesis"/>
    <property type="evidence" value="ECO:0007669"/>
    <property type="project" value="UniProtKB-KW"/>
</dbReference>
<dbReference type="Gene3D" id="3.10.20.90">
    <property type="entry name" value="Phosphatidylinositol 3-kinase Catalytic Subunit, Chain A, domain 1"/>
    <property type="match status" value="1"/>
</dbReference>
<dbReference type="InterPro" id="IPR028135">
    <property type="entry name" value="Ub_USP-typ"/>
</dbReference>
<dbReference type="Pfam" id="PF14836">
    <property type="entry name" value="Ubiquitin_3"/>
    <property type="match status" value="1"/>
</dbReference>
<proteinExistence type="uncertain"/>
<organism>
    <name type="scientific">Homo sapiens</name>
    <name type="common">Human</name>
    <dbReference type="NCBI Taxonomy" id="9606"/>
    <lineage>
        <taxon>Eukaryota</taxon>
        <taxon>Metazoa</taxon>
        <taxon>Chordata</taxon>
        <taxon>Craniata</taxon>
        <taxon>Vertebrata</taxon>
        <taxon>Euteleostomi</taxon>
        <taxon>Mammalia</taxon>
        <taxon>Eutheria</taxon>
        <taxon>Euarchontoglires</taxon>
        <taxon>Primates</taxon>
        <taxon>Haplorrhini</taxon>
        <taxon>Catarrhini</taxon>
        <taxon>Hominidae</taxon>
        <taxon>Homo</taxon>
    </lineage>
</organism>
<reference key="1">
    <citation type="journal article" date="2005" name="Mol. Reprod. Dev.">
        <title>Identification and characterization of a novel testicular germ cell-specific gene Ggnbp1.</title>
        <authorList>
            <person name="Zhou Y."/>
            <person name="Zhao Q."/>
            <person name="Bishop C.E."/>
            <person name="Huang P."/>
            <person name="Lu B."/>
        </authorList>
    </citation>
    <scope>NUCLEOTIDE SEQUENCE [MRNA] (ISOFORMS 1 AND 2)</scope>
</reference>
<reference key="2">
    <citation type="journal article" date="2003" name="Nature">
        <title>The DNA sequence and analysis of human chromosome 6.</title>
        <authorList>
            <person name="Mungall A.J."/>
            <person name="Palmer S.A."/>
            <person name="Sims S.K."/>
            <person name="Edwards C.A."/>
            <person name="Ashurst J.L."/>
            <person name="Wilming L."/>
            <person name="Jones M.C."/>
            <person name="Horton R."/>
            <person name="Hunt S.E."/>
            <person name="Scott C.E."/>
            <person name="Gilbert J.G.R."/>
            <person name="Clamp M.E."/>
            <person name="Bethel G."/>
            <person name="Milne S."/>
            <person name="Ainscough R."/>
            <person name="Almeida J.P."/>
            <person name="Ambrose K.D."/>
            <person name="Andrews T.D."/>
            <person name="Ashwell R.I.S."/>
            <person name="Babbage A.K."/>
            <person name="Bagguley C.L."/>
            <person name="Bailey J."/>
            <person name="Banerjee R."/>
            <person name="Barker D.J."/>
            <person name="Barlow K.F."/>
            <person name="Bates K."/>
            <person name="Beare D.M."/>
            <person name="Beasley H."/>
            <person name="Beasley O."/>
            <person name="Bird C.P."/>
            <person name="Blakey S.E."/>
            <person name="Bray-Allen S."/>
            <person name="Brook J."/>
            <person name="Brown A.J."/>
            <person name="Brown J.Y."/>
            <person name="Burford D.C."/>
            <person name="Burrill W."/>
            <person name="Burton J."/>
            <person name="Carder C."/>
            <person name="Carter N.P."/>
            <person name="Chapman J.C."/>
            <person name="Clark S.Y."/>
            <person name="Clark G."/>
            <person name="Clee C.M."/>
            <person name="Clegg S."/>
            <person name="Cobley V."/>
            <person name="Collier R.E."/>
            <person name="Collins J.E."/>
            <person name="Colman L.K."/>
            <person name="Corby N.R."/>
            <person name="Coville G.J."/>
            <person name="Culley K.M."/>
            <person name="Dhami P."/>
            <person name="Davies J."/>
            <person name="Dunn M."/>
            <person name="Earthrowl M.E."/>
            <person name="Ellington A.E."/>
            <person name="Evans K.A."/>
            <person name="Faulkner L."/>
            <person name="Francis M.D."/>
            <person name="Frankish A."/>
            <person name="Frankland J."/>
            <person name="French L."/>
            <person name="Garner P."/>
            <person name="Garnett J."/>
            <person name="Ghori M.J."/>
            <person name="Gilby L.M."/>
            <person name="Gillson C.J."/>
            <person name="Glithero R.J."/>
            <person name="Grafham D.V."/>
            <person name="Grant M."/>
            <person name="Gribble S."/>
            <person name="Griffiths C."/>
            <person name="Griffiths M.N.D."/>
            <person name="Hall R."/>
            <person name="Halls K.S."/>
            <person name="Hammond S."/>
            <person name="Harley J.L."/>
            <person name="Hart E.A."/>
            <person name="Heath P.D."/>
            <person name="Heathcott R."/>
            <person name="Holmes S.J."/>
            <person name="Howden P.J."/>
            <person name="Howe K.L."/>
            <person name="Howell G.R."/>
            <person name="Huckle E."/>
            <person name="Humphray S.J."/>
            <person name="Humphries M.D."/>
            <person name="Hunt A.R."/>
            <person name="Johnson C.M."/>
            <person name="Joy A.A."/>
            <person name="Kay M."/>
            <person name="Keenan S.J."/>
            <person name="Kimberley A.M."/>
            <person name="King A."/>
            <person name="Laird G.K."/>
            <person name="Langford C."/>
            <person name="Lawlor S."/>
            <person name="Leongamornlert D.A."/>
            <person name="Leversha M."/>
            <person name="Lloyd C.R."/>
            <person name="Lloyd D.M."/>
            <person name="Loveland J.E."/>
            <person name="Lovell J."/>
            <person name="Martin S."/>
            <person name="Mashreghi-Mohammadi M."/>
            <person name="Maslen G.L."/>
            <person name="Matthews L."/>
            <person name="McCann O.T."/>
            <person name="McLaren S.J."/>
            <person name="McLay K."/>
            <person name="McMurray A."/>
            <person name="Moore M.J.F."/>
            <person name="Mullikin J.C."/>
            <person name="Niblett D."/>
            <person name="Nickerson T."/>
            <person name="Novik K.L."/>
            <person name="Oliver K."/>
            <person name="Overton-Larty E.K."/>
            <person name="Parker A."/>
            <person name="Patel R."/>
            <person name="Pearce A.V."/>
            <person name="Peck A.I."/>
            <person name="Phillimore B.J.C.T."/>
            <person name="Phillips S."/>
            <person name="Plumb R.W."/>
            <person name="Porter K.M."/>
            <person name="Ramsey Y."/>
            <person name="Ranby S.A."/>
            <person name="Rice C.M."/>
            <person name="Ross M.T."/>
            <person name="Searle S.M."/>
            <person name="Sehra H.K."/>
            <person name="Sheridan E."/>
            <person name="Skuce C.D."/>
            <person name="Smith S."/>
            <person name="Smith M."/>
            <person name="Spraggon L."/>
            <person name="Squares S.L."/>
            <person name="Steward C.A."/>
            <person name="Sycamore N."/>
            <person name="Tamlyn-Hall G."/>
            <person name="Tester J."/>
            <person name="Theaker A.J."/>
            <person name="Thomas D.W."/>
            <person name="Thorpe A."/>
            <person name="Tracey A."/>
            <person name="Tromans A."/>
            <person name="Tubby B."/>
            <person name="Wall M."/>
            <person name="Wallis J.M."/>
            <person name="West A.P."/>
            <person name="White S.S."/>
            <person name="Whitehead S.L."/>
            <person name="Whittaker H."/>
            <person name="Wild A."/>
            <person name="Willey D.J."/>
            <person name="Wilmer T.E."/>
            <person name="Wood J.M."/>
            <person name="Wray P.W."/>
            <person name="Wyatt J.C."/>
            <person name="Young L."/>
            <person name="Younger R.M."/>
            <person name="Bentley D.R."/>
            <person name="Coulson A."/>
            <person name="Durbin R.M."/>
            <person name="Hubbard T."/>
            <person name="Sulston J.E."/>
            <person name="Dunham I."/>
            <person name="Rogers J."/>
            <person name="Beck S."/>
        </authorList>
    </citation>
    <scope>NUCLEOTIDE SEQUENCE [LARGE SCALE GENOMIC DNA]</scope>
</reference>
<evidence type="ECO:0000250" key="1"/>
<evidence type="ECO:0000250" key="2">
    <source>
        <dbReference type="UniProtKB" id="Q6K1E7"/>
    </source>
</evidence>
<evidence type="ECO:0000303" key="3">
    <source>
    </source>
</evidence>
<evidence type="ECO:0000305" key="4"/>
<sequence>MKEEDSSFKLCVPGIVALQSPPNKAFRSTDTVGFLESELKKLLGMQQESRLWKLGSQEGRELLTRPEITVVEGEGYEVQRRLRHLPSPISVAQCLLLEEKGEMGNWPPE</sequence>